<reference key="1">
    <citation type="journal article" date="2006" name="Proc. Natl. Acad. Sci. U.S.A.">
        <title>Comparative genomics of the lactic acid bacteria.</title>
        <authorList>
            <person name="Makarova K.S."/>
            <person name="Slesarev A."/>
            <person name="Wolf Y.I."/>
            <person name="Sorokin A."/>
            <person name="Mirkin B."/>
            <person name="Koonin E.V."/>
            <person name="Pavlov A."/>
            <person name="Pavlova N."/>
            <person name="Karamychev V."/>
            <person name="Polouchine N."/>
            <person name="Shakhova V."/>
            <person name="Grigoriev I."/>
            <person name="Lou Y."/>
            <person name="Rohksar D."/>
            <person name="Lucas S."/>
            <person name="Huang K."/>
            <person name="Goodstein D.M."/>
            <person name="Hawkins T."/>
            <person name="Plengvidhya V."/>
            <person name="Welker D."/>
            <person name="Hughes J."/>
            <person name="Goh Y."/>
            <person name="Benson A."/>
            <person name="Baldwin K."/>
            <person name="Lee J.-H."/>
            <person name="Diaz-Muniz I."/>
            <person name="Dosti B."/>
            <person name="Smeianov V."/>
            <person name="Wechter W."/>
            <person name="Barabote R."/>
            <person name="Lorca G."/>
            <person name="Altermann E."/>
            <person name="Barrangou R."/>
            <person name="Ganesan B."/>
            <person name="Xie Y."/>
            <person name="Rawsthorne H."/>
            <person name="Tamir D."/>
            <person name="Parker C."/>
            <person name="Breidt F."/>
            <person name="Broadbent J.R."/>
            <person name="Hutkins R."/>
            <person name="O'Sullivan D."/>
            <person name="Steele J."/>
            <person name="Unlu G."/>
            <person name="Saier M.H. Jr."/>
            <person name="Klaenhammer T."/>
            <person name="Richardson P."/>
            <person name="Kozyavkin S."/>
            <person name="Weimer B.C."/>
            <person name="Mills D.A."/>
        </authorList>
    </citation>
    <scope>NUCLEOTIDE SEQUENCE [LARGE SCALE GENOMIC DNA]</scope>
    <source>
        <strain>ATCC 33323 / DSM 20243 / BCRC 14619 / CIP 102991 / JCM 1131 / KCTC 3163 / NCIMB 11718 / NCTC 13722 / AM63</strain>
    </source>
</reference>
<gene>
    <name evidence="1" type="primary">scpA</name>
    <name type="ordered locus">LGAS_0886</name>
</gene>
<organism>
    <name type="scientific">Lactobacillus gasseri (strain ATCC 33323 / DSM 20243 / BCRC 14619 / CIP 102991 / JCM 1131 / KCTC 3163 / NCIMB 11718 / NCTC 13722 / AM63)</name>
    <dbReference type="NCBI Taxonomy" id="324831"/>
    <lineage>
        <taxon>Bacteria</taxon>
        <taxon>Bacillati</taxon>
        <taxon>Bacillota</taxon>
        <taxon>Bacilli</taxon>
        <taxon>Lactobacillales</taxon>
        <taxon>Lactobacillaceae</taxon>
        <taxon>Lactobacillus</taxon>
    </lineage>
</organism>
<name>SCPA_LACGA</name>
<keyword id="KW-0131">Cell cycle</keyword>
<keyword id="KW-0132">Cell division</keyword>
<keyword id="KW-0159">Chromosome partition</keyword>
<keyword id="KW-0963">Cytoplasm</keyword>
<dbReference type="EMBL" id="CP000413">
    <property type="protein sequence ID" value="ABJ60275.1"/>
    <property type="molecule type" value="Genomic_DNA"/>
</dbReference>
<dbReference type="RefSeq" id="WP_003647411.1">
    <property type="nucleotide sequence ID" value="NZ_WBMG01000010.1"/>
</dbReference>
<dbReference type="SMR" id="Q043U7"/>
<dbReference type="GeneID" id="29639904"/>
<dbReference type="KEGG" id="lga:LGAS_0886"/>
<dbReference type="HOGENOM" id="CLU_038686_3_1_9"/>
<dbReference type="BioCyc" id="LGAS324831:G1G6Y-880-MONOMER"/>
<dbReference type="Proteomes" id="UP000000664">
    <property type="component" value="Chromosome"/>
</dbReference>
<dbReference type="GO" id="GO:0005737">
    <property type="term" value="C:cytoplasm"/>
    <property type="evidence" value="ECO:0007669"/>
    <property type="project" value="UniProtKB-SubCell"/>
</dbReference>
<dbReference type="GO" id="GO:0051301">
    <property type="term" value="P:cell division"/>
    <property type="evidence" value="ECO:0007669"/>
    <property type="project" value="UniProtKB-KW"/>
</dbReference>
<dbReference type="GO" id="GO:0007059">
    <property type="term" value="P:chromosome segregation"/>
    <property type="evidence" value="ECO:0007669"/>
    <property type="project" value="UniProtKB-UniRule"/>
</dbReference>
<dbReference type="GO" id="GO:0006260">
    <property type="term" value="P:DNA replication"/>
    <property type="evidence" value="ECO:0007669"/>
    <property type="project" value="UniProtKB-UniRule"/>
</dbReference>
<dbReference type="Gene3D" id="6.10.250.2410">
    <property type="match status" value="1"/>
</dbReference>
<dbReference type="HAMAP" id="MF_01805">
    <property type="entry name" value="ScpA"/>
    <property type="match status" value="1"/>
</dbReference>
<dbReference type="InterPro" id="IPR003768">
    <property type="entry name" value="ScpA"/>
</dbReference>
<dbReference type="PANTHER" id="PTHR33969">
    <property type="entry name" value="SEGREGATION AND CONDENSATION PROTEIN A"/>
    <property type="match status" value="1"/>
</dbReference>
<dbReference type="PANTHER" id="PTHR33969:SF2">
    <property type="entry name" value="SEGREGATION AND CONDENSATION PROTEIN A"/>
    <property type="match status" value="1"/>
</dbReference>
<dbReference type="Pfam" id="PF02616">
    <property type="entry name" value="SMC_ScpA"/>
    <property type="match status" value="1"/>
</dbReference>
<evidence type="ECO:0000255" key="1">
    <source>
        <dbReference type="HAMAP-Rule" id="MF_01805"/>
    </source>
</evidence>
<feature type="chain" id="PRO_1000069971" description="Segregation and condensation protein A">
    <location>
        <begin position="1"/>
        <end position="247"/>
    </location>
</feature>
<proteinExistence type="inferred from homology"/>
<comment type="function">
    <text evidence="1">Participates in chromosomal partition during cell division. May act via the formation of a condensin-like complex containing Smc and ScpB that pull DNA away from mid-cell into both cell halves.</text>
</comment>
<comment type="subunit">
    <text evidence="1">Component of a cohesin-like complex composed of ScpA, ScpB and the Smc homodimer, in which ScpA and ScpB bind to the head domain of Smc. The presence of the three proteins is required for the association of the complex with DNA.</text>
</comment>
<comment type="subcellular location">
    <subcellularLocation>
        <location evidence="1">Cytoplasm</location>
    </subcellularLocation>
    <text evidence="1">Associated with two foci at the outer edges of the nucleoid region in young cells, and at four foci within both cell halves in older cells.</text>
</comment>
<comment type="similarity">
    <text evidence="1">Belongs to the ScpA family.</text>
</comment>
<protein>
    <recommendedName>
        <fullName evidence="1">Segregation and condensation protein A</fullName>
    </recommendedName>
</protein>
<accession>Q043U7</accession>
<sequence length="247" mass="28655">MNNADELTLDLPNFTGPLDLLLHLIRSQKIDIYDIPIAKITGQYLANLARWQTLDLQIAGEYFVMASTLLRIKSQYLLPKNDFVEEDQYQEDPRAELVEQLVQYSVFQRIAEYFKKRDEEMPITVAKDPSVSPKKKVEPLPLGEITSDELANTFKVVLERFKLRKPQVGQIEVHEASIEEMTTFLKDKLHHRKSTSFFDCIKNFQDLDQVIGLFLAVLELCRDHKILVKQNRDFGDLELEKVETNGK</sequence>